<proteinExistence type="inferred from homology"/>
<feature type="chain" id="PRO_1000098829" description="Protease HtpX homolog">
    <location>
        <begin position="1"/>
        <end position="289"/>
    </location>
</feature>
<feature type="transmembrane region" description="Helical" evidence="1">
    <location>
        <begin position="7"/>
        <end position="26"/>
    </location>
</feature>
<feature type="transmembrane region" description="Helical" evidence="1">
    <location>
        <begin position="31"/>
        <end position="48"/>
    </location>
</feature>
<feature type="transmembrane region" description="Helical" evidence="1">
    <location>
        <begin position="151"/>
        <end position="171"/>
    </location>
</feature>
<feature type="transmembrane region" description="Helical" evidence="1">
    <location>
        <begin position="182"/>
        <end position="202"/>
    </location>
</feature>
<feature type="active site" evidence="1">
    <location>
        <position position="133"/>
    </location>
</feature>
<feature type="binding site" evidence="1">
    <location>
        <position position="132"/>
    </location>
    <ligand>
        <name>Zn(2+)</name>
        <dbReference type="ChEBI" id="CHEBI:29105"/>
        <note>catalytic</note>
    </ligand>
</feature>
<feature type="binding site" evidence="1">
    <location>
        <position position="136"/>
    </location>
    <ligand>
        <name>Zn(2+)</name>
        <dbReference type="ChEBI" id="CHEBI:29105"/>
        <note>catalytic</note>
    </ligand>
</feature>
<feature type="binding site" evidence="1">
    <location>
        <position position="207"/>
    </location>
    <ligand>
        <name>Zn(2+)</name>
        <dbReference type="ChEBI" id="CHEBI:29105"/>
        <note>catalytic</note>
    </ligand>
</feature>
<comment type="cofactor">
    <cofactor evidence="1">
        <name>Zn(2+)</name>
        <dbReference type="ChEBI" id="CHEBI:29105"/>
    </cofactor>
    <text evidence="1">Binds 1 zinc ion per subunit.</text>
</comment>
<comment type="subcellular location">
    <subcellularLocation>
        <location evidence="1">Cell inner membrane</location>
        <topology evidence="1">Multi-pass membrane protein</topology>
    </subcellularLocation>
</comment>
<comment type="similarity">
    <text evidence="1">Belongs to the peptidase M48B family.</text>
</comment>
<evidence type="ECO:0000255" key="1">
    <source>
        <dbReference type="HAMAP-Rule" id="MF_00188"/>
    </source>
</evidence>
<accession>B2J204</accession>
<dbReference type="EC" id="3.4.24.-" evidence="1"/>
<dbReference type="EMBL" id="CP001037">
    <property type="protein sequence ID" value="ACC82006.1"/>
    <property type="molecule type" value="Genomic_DNA"/>
</dbReference>
<dbReference type="RefSeq" id="WP_012409978.1">
    <property type="nucleotide sequence ID" value="NC_010628.1"/>
</dbReference>
<dbReference type="SMR" id="B2J204"/>
<dbReference type="EnsemblBacteria" id="ACC82006">
    <property type="protein sequence ID" value="ACC82006"/>
    <property type="gene ID" value="Npun_R3611"/>
</dbReference>
<dbReference type="KEGG" id="npu:Npun_R3611"/>
<dbReference type="eggNOG" id="COG0501">
    <property type="taxonomic scope" value="Bacteria"/>
</dbReference>
<dbReference type="HOGENOM" id="CLU_042266_3_0_3"/>
<dbReference type="OrthoDB" id="15218at2"/>
<dbReference type="PhylomeDB" id="B2J204"/>
<dbReference type="Proteomes" id="UP000001191">
    <property type="component" value="Chromosome"/>
</dbReference>
<dbReference type="GO" id="GO:0005886">
    <property type="term" value="C:plasma membrane"/>
    <property type="evidence" value="ECO:0007669"/>
    <property type="project" value="UniProtKB-SubCell"/>
</dbReference>
<dbReference type="GO" id="GO:0004222">
    <property type="term" value="F:metalloendopeptidase activity"/>
    <property type="evidence" value="ECO:0007669"/>
    <property type="project" value="UniProtKB-UniRule"/>
</dbReference>
<dbReference type="GO" id="GO:0008270">
    <property type="term" value="F:zinc ion binding"/>
    <property type="evidence" value="ECO:0007669"/>
    <property type="project" value="UniProtKB-UniRule"/>
</dbReference>
<dbReference type="GO" id="GO:0006508">
    <property type="term" value="P:proteolysis"/>
    <property type="evidence" value="ECO:0007669"/>
    <property type="project" value="UniProtKB-KW"/>
</dbReference>
<dbReference type="CDD" id="cd07336">
    <property type="entry name" value="M48B_HtpX_like"/>
    <property type="match status" value="1"/>
</dbReference>
<dbReference type="Gene3D" id="3.30.2010.10">
    <property type="entry name" value="Metalloproteases ('zincins'), catalytic domain"/>
    <property type="match status" value="1"/>
</dbReference>
<dbReference type="HAMAP" id="MF_00188">
    <property type="entry name" value="Pept_M48_protease_HtpX"/>
    <property type="match status" value="1"/>
</dbReference>
<dbReference type="InterPro" id="IPR050083">
    <property type="entry name" value="HtpX_protease"/>
</dbReference>
<dbReference type="InterPro" id="IPR022919">
    <property type="entry name" value="Pept_M48_protease_HtpX"/>
</dbReference>
<dbReference type="InterPro" id="IPR001915">
    <property type="entry name" value="Peptidase_M48"/>
</dbReference>
<dbReference type="PANTHER" id="PTHR43221">
    <property type="entry name" value="PROTEASE HTPX"/>
    <property type="match status" value="1"/>
</dbReference>
<dbReference type="PANTHER" id="PTHR43221:SF1">
    <property type="entry name" value="PROTEASE HTPX"/>
    <property type="match status" value="1"/>
</dbReference>
<dbReference type="Pfam" id="PF01435">
    <property type="entry name" value="Peptidase_M48"/>
    <property type="match status" value="1"/>
</dbReference>
<dbReference type="PROSITE" id="PS00142">
    <property type="entry name" value="ZINC_PROTEASE"/>
    <property type="match status" value="1"/>
</dbReference>
<keyword id="KW-0997">Cell inner membrane</keyword>
<keyword id="KW-1003">Cell membrane</keyword>
<keyword id="KW-0378">Hydrolase</keyword>
<keyword id="KW-0472">Membrane</keyword>
<keyword id="KW-0479">Metal-binding</keyword>
<keyword id="KW-0482">Metalloprotease</keyword>
<keyword id="KW-0645">Protease</keyword>
<keyword id="KW-1185">Reference proteome</keyword>
<keyword id="KW-0812">Transmembrane</keyword>
<keyword id="KW-1133">Transmembrane helix</keyword>
<keyword id="KW-0862">Zinc</keyword>
<reference key="1">
    <citation type="journal article" date="2013" name="Plant Physiol.">
        <title>A Nostoc punctiforme Sugar Transporter Necessary to Establish a Cyanobacterium-Plant Symbiosis.</title>
        <authorList>
            <person name="Ekman M."/>
            <person name="Picossi S."/>
            <person name="Campbell E.L."/>
            <person name="Meeks J.C."/>
            <person name="Flores E."/>
        </authorList>
    </citation>
    <scope>NUCLEOTIDE SEQUENCE [LARGE SCALE GENOMIC DNA]</scope>
    <source>
        <strain>ATCC 29133 / PCC 73102</strain>
    </source>
</reference>
<organism>
    <name type="scientific">Nostoc punctiforme (strain ATCC 29133 / PCC 73102)</name>
    <dbReference type="NCBI Taxonomy" id="63737"/>
    <lineage>
        <taxon>Bacteria</taxon>
        <taxon>Bacillati</taxon>
        <taxon>Cyanobacteriota</taxon>
        <taxon>Cyanophyceae</taxon>
        <taxon>Nostocales</taxon>
        <taxon>Nostocaceae</taxon>
        <taxon>Nostoc</taxon>
    </lineage>
</organism>
<protein>
    <recommendedName>
        <fullName evidence="1">Protease HtpX homolog</fullName>
        <ecNumber evidence="1">3.4.24.-</ecNumber>
    </recommendedName>
</protein>
<gene>
    <name evidence="1" type="primary">htpX</name>
    <name type="ordered locus">Npun_R3611</name>
</gene>
<name>HTPX_NOSP7</name>
<sequence>MGNQVKTAALLAALSGLLIAISYWVIGGSSGLIIGIGLAAVTNLFSWYQSDKIALAVYQAQPVSEGEAPGLYRMVQRLSDRANIPMPRVYIVPSQGANAFATGRDPEHAAVAVTEGILNILPDDELEGVIAHELTHIINRDTLTQAVAATVAGAISFLAQMVSYSLWFGGGSRDDNRGANPLGVLLTVMLAPLAATIIQLAISRTREFSADAGSARLTGNPRALARALQRLEALAKQIPLNANPAFEPLLIINSISGQFLGNLFSSHPATEARVAALLKLEQQLPTKAY</sequence>